<evidence type="ECO:0000255" key="1">
    <source>
        <dbReference type="HAMAP-Rule" id="MF_01305"/>
    </source>
</evidence>
<proteinExistence type="inferred from homology"/>
<reference key="1">
    <citation type="journal article" date="2004" name="Plant Physiol.">
        <title>A comparison of rice chloroplast genomes.</title>
        <authorList>
            <person name="Tang J."/>
            <person name="Xia H."/>
            <person name="Cao M."/>
            <person name="Zhang X."/>
            <person name="Zeng W."/>
            <person name="Hu S."/>
            <person name="Tong W."/>
            <person name="Wang J."/>
            <person name="Wang J."/>
            <person name="Yu J."/>
            <person name="Yang H."/>
            <person name="Zhu L."/>
        </authorList>
    </citation>
    <scope>NUCLEOTIDE SEQUENCE [LARGE SCALE GENOMIC DNA]</scope>
    <source>
        <strain>cv. PA64s</strain>
    </source>
</reference>
<accession>P0C414</accession>
<keyword id="KW-0150">Chloroplast</keyword>
<keyword id="KW-0472">Membrane</keyword>
<keyword id="KW-0602">Photosynthesis</keyword>
<keyword id="KW-0604">Photosystem II</keyword>
<keyword id="KW-0934">Plastid</keyword>
<keyword id="KW-0674">Reaction center</keyword>
<keyword id="KW-0793">Thylakoid</keyword>
<keyword id="KW-0812">Transmembrane</keyword>
<keyword id="KW-1133">Transmembrane helix</keyword>
<sequence>MADTTGRIPLWLIGTVTGIAVIGLIGVFFYGSYSGLGSSL</sequence>
<dbReference type="EMBL" id="AY522331">
    <property type="status" value="NOT_ANNOTATED_CDS"/>
    <property type="molecule type" value="Genomic_DNA"/>
</dbReference>
<dbReference type="RefSeq" id="YP_009305318.1">
    <property type="nucleotide sequence ID" value="NC_031333.1"/>
</dbReference>
<dbReference type="SMR" id="P0C414"/>
<dbReference type="GeneID" id="29141384"/>
<dbReference type="GO" id="GO:0009535">
    <property type="term" value="C:chloroplast thylakoid membrane"/>
    <property type="evidence" value="ECO:0007669"/>
    <property type="project" value="UniProtKB-SubCell"/>
</dbReference>
<dbReference type="GO" id="GO:0009539">
    <property type="term" value="C:photosystem II reaction center"/>
    <property type="evidence" value="ECO:0007669"/>
    <property type="project" value="InterPro"/>
</dbReference>
<dbReference type="GO" id="GO:0009536">
    <property type="term" value="C:plastid"/>
    <property type="evidence" value="ECO:0000305"/>
    <property type="project" value="Gramene"/>
</dbReference>
<dbReference type="GO" id="GO:0015979">
    <property type="term" value="P:photosynthesis"/>
    <property type="evidence" value="ECO:0007669"/>
    <property type="project" value="UniProtKB-UniRule"/>
</dbReference>
<dbReference type="Gene3D" id="6.10.250.2070">
    <property type="match status" value="1"/>
</dbReference>
<dbReference type="HAMAP" id="MF_01305">
    <property type="entry name" value="PSII_PsbJ"/>
    <property type="match status" value="1"/>
</dbReference>
<dbReference type="InterPro" id="IPR002682">
    <property type="entry name" value="PSII_PsbJ"/>
</dbReference>
<dbReference type="InterPro" id="IPR037267">
    <property type="entry name" value="PSII_PsbJ_sf"/>
</dbReference>
<dbReference type="NCBIfam" id="NF002722">
    <property type="entry name" value="PRK02565.1"/>
    <property type="match status" value="1"/>
</dbReference>
<dbReference type="PANTHER" id="PTHR34812">
    <property type="entry name" value="PHOTOSYSTEM II REACTION CENTER PROTEIN J"/>
    <property type="match status" value="1"/>
</dbReference>
<dbReference type="PANTHER" id="PTHR34812:SF3">
    <property type="entry name" value="PHOTOSYSTEM II REACTION CENTER PROTEIN J"/>
    <property type="match status" value="1"/>
</dbReference>
<dbReference type="Pfam" id="PF01788">
    <property type="entry name" value="PsbJ"/>
    <property type="match status" value="1"/>
</dbReference>
<dbReference type="SUPFAM" id="SSF161021">
    <property type="entry name" value="Photosystem II reaction center protein J, PsbJ"/>
    <property type="match status" value="1"/>
</dbReference>
<name>PSBJ_ORYSA</name>
<protein>
    <recommendedName>
        <fullName evidence="1">Photosystem II reaction center protein J</fullName>
        <shortName evidence="1">PSII-J</shortName>
    </recommendedName>
</protein>
<geneLocation type="chloroplast"/>
<organism>
    <name type="scientific">Oryza sativa</name>
    <name type="common">Rice</name>
    <dbReference type="NCBI Taxonomy" id="4530"/>
    <lineage>
        <taxon>Eukaryota</taxon>
        <taxon>Viridiplantae</taxon>
        <taxon>Streptophyta</taxon>
        <taxon>Embryophyta</taxon>
        <taxon>Tracheophyta</taxon>
        <taxon>Spermatophyta</taxon>
        <taxon>Magnoliopsida</taxon>
        <taxon>Liliopsida</taxon>
        <taxon>Poales</taxon>
        <taxon>Poaceae</taxon>
        <taxon>BOP clade</taxon>
        <taxon>Oryzoideae</taxon>
        <taxon>Oryzeae</taxon>
        <taxon>Oryzinae</taxon>
        <taxon>Oryza</taxon>
    </lineage>
</organism>
<gene>
    <name evidence="1" type="primary">psbJ</name>
</gene>
<comment type="function">
    <text evidence="1">One of the components of the core complex of photosystem II (PSII). PSII is a light-driven water:plastoquinone oxidoreductase that uses light energy to abstract electrons from H(2)O, generating O(2) and a proton gradient subsequently used for ATP formation. It consists of a core antenna complex that captures photons, and an electron transfer chain that converts photonic excitation into a charge separation.</text>
</comment>
<comment type="subunit">
    <text evidence="1">PSII is composed of 1 copy each of membrane proteins PsbA, PsbB, PsbC, PsbD, PsbE, PsbF, PsbH, PsbI, PsbJ, PsbK, PsbL, PsbM, PsbT, PsbX, PsbY, PsbZ, Psb30/Ycf12, at least 3 peripheral proteins of the oxygen-evolving complex and a large number of cofactors. It forms dimeric complexes.</text>
</comment>
<comment type="subcellular location">
    <subcellularLocation>
        <location evidence="1">Plastid</location>
        <location evidence="1">Chloroplast thylakoid membrane</location>
        <topology evidence="1">Single-pass membrane protein</topology>
    </subcellularLocation>
</comment>
<comment type="similarity">
    <text evidence="1">Belongs to the PsbJ family.</text>
</comment>
<feature type="chain" id="PRO_0000289562" description="Photosystem II reaction center protein J">
    <location>
        <begin position="1"/>
        <end position="40"/>
    </location>
</feature>
<feature type="transmembrane region" description="Helical" evidence="1">
    <location>
        <begin position="8"/>
        <end position="28"/>
    </location>
</feature>